<comment type="similarity">
    <text evidence="1">Belongs to the eukaryotic ribosomal protein eS28 family.</text>
</comment>
<protein>
    <recommendedName>
        <fullName evidence="1">Small ribosomal subunit protein eS28</fullName>
    </recommendedName>
    <alternativeName>
        <fullName>40S ribosomal protein S28</fullName>
    </alternativeName>
    <alternativeName>
        <fullName>S33</fullName>
    </alternativeName>
</protein>
<name>RS28_KLUMA</name>
<gene>
    <name type="primary">RPS28</name>
</gene>
<organism>
    <name type="scientific">Kluyveromyces marxianus</name>
    <name type="common">Yeast</name>
    <name type="synonym">Candida kefyr</name>
    <dbReference type="NCBI Taxonomy" id="4911"/>
    <lineage>
        <taxon>Eukaryota</taxon>
        <taxon>Fungi</taxon>
        <taxon>Dikarya</taxon>
        <taxon>Ascomycota</taxon>
        <taxon>Saccharomycotina</taxon>
        <taxon>Saccharomycetes</taxon>
        <taxon>Saccharomycetales</taxon>
        <taxon>Saccharomycetaceae</taxon>
        <taxon>Kluyveromyces</taxon>
    </lineage>
</organism>
<feature type="chain" id="PRO_0000136839" description="Small ribosomal subunit protein eS28">
    <location>
        <begin position="1"/>
        <end position="67"/>
    </location>
</feature>
<reference key="1">
    <citation type="journal article" date="1992" name="Yeast">
        <title>Structure and expression of the ABF1-regulated ribosomal protein S33 gene in Kluyveromyces.</title>
        <authorList>
            <person name="Hoekstra R."/>
            <person name="Ferreira P.M."/>
            <person name="Bootsman T.C."/>
            <person name="Mager W.H."/>
            <person name="Planta R.J."/>
        </authorList>
    </citation>
    <scope>NUCLEOTIDE SEQUENCE [GENOMIC DNA]</scope>
    <source>
        <strain>ATCC 26548 / CBS 6556 / NRRL Y-7571</strain>
    </source>
</reference>
<evidence type="ECO:0000305" key="1"/>
<proteinExistence type="inferred from homology"/>
<sequence length="67" mass="7522">MDSKTPVTLAKVIKVLGRTGSRGGVTQVRVEFLEDTTRTIVRNVKGPVREGDILVLMESEREARRLR</sequence>
<keyword id="KW-0687">Ribonucleoprotein</keyword>
<keyword id="KW-0689">Ribosomal protein</keyword>
<dbReference type="EMBL" id="X69583">
    <property type="protein sequence ID" value="CAA49297.1"/>
    <property type="molecule type" value="Genomic_DNA"/>
</dbReference>
<dbReference type="PIR" id="S30006">
    <property type="entry name" value="S30006"/>
</dbReference>
<dbReference type="SMR" id="P33286"/>
<dbReference type="VEuPathDB" id="FungiDB:KLMA_40189"/>
<dbReference type="GO" id="GO:0022627">
    <property type="term" value="C:cytosolic small ribosomal subunit"/>
    <property type="evidence" value="ECO:0007669"/>
    <property type="project" value="TreeGrafter"/>
</dbReference>
<dbReference type="GO" id="GO:0003735">
    <property type="term" value="F:structural constituent of ribosome"/>
    <property type="evidence" value="ECO:0007669"/>
    <property type="project" value="InterPro"/>
</dbReference>
<dbReference type="GO" id="GO:0030490">
    <property type="term" value="P:maturation of SSU-rRNA"/>
    <property type="evidence" value="ECO:0007669"/>
    <property type="project" value="TreeGrafter"/>
</dbReference>
<dbReference type="GO" id="GO:0000028">
    <property type="term" value="P:ribosomal small subunit assembly"/>
    <property type="evidence" value="ECO:0007669"/>
    <property type="project" value="TreeGrafter"/>
</dbReference>
<dbReference type="GO" id="GO:0006412">
    <property type="term" value="P:translation"/>
    <property type="evidence" value="ECO:0007669"/>
    <property type="project" value="InterPro"/>
</dbReference>
<dbReference type="CDD" id="cd04457">
    <property type="entry name" value="S1_S28E"/>
    <property type="match status" value="1"/>
</dbReference>
<dbReference type="FunFam" id="2.40.50.140:FF:000025">
    <property type="entry name" value="40S ribosomal protein S28"/>
    <property type="match status" value="1"/>
</dbReference>
<dbReference type="Gene3D" id="2.40.50.140">
    <property type="entry name" value="Nucleic acid-binding proteins"/>
    <property type="match status" value="1"/>
</dbReference>
<dbReference type="HAMAP" id="MF_00292">
    <property type="entry name" value="Ribosomal_eS28"/>
    <property type="match status" value="1"/>
</dbReference>
<dbReference type="InterPro" id="IPR012340">
    <property type="entry name" value="NA-bd_OB-fold"/>
</dbReference>
<dbReference type="InterPro" id="IPR000289">
    <property type="entry name" value="Ribosomal_eS28"/>
</dbReference>
<dbReference type="InterPro" id="IPR028626">
    <property type="entry name" value="Ribosomal_eS28_CS"/>
</dbReference>
<dbReference type="PANTHER" id="PTHR10769">
    <property type="entry name" value="40S RIBOSOMAL PROTEIN S28"/>
    <property type="match status" value="1"/>
</dbReference>
<dbReference type="PANTHER" id="PTHR10769:SF3">
    <property type="entry name" value="SMALL RIBOSOMAL SUBUNIT PROTEIN ES28"/>
    <property type="match status" value="1"/>
</dbReference>
<dbReference type="Pfam" id="PF01200">
    <property type="entry name" value="Ribosomal_S28e"/>
    <property type="match status" value="1"/>
</dbReference>
<dbReference type="SUPFAM" id="SSF50249">
    <property type="entry name" value="Nucleic acid-binding proteins"/>
    <property type="match status" value="1"/>
</dbReference>
<dbReference type="PROSITE" id="PS00961">
    <property type="entry name" value="RIBOSOMAL_S28E"/>
    <property type="match status" value="1"/>
</dbReference>
<accession>P33286</accession>